<dbReference type="EMBL" id="AM884176">
    <property type="protein sequence ID" value="CAP04222.1"/>
    <property type="molecule type" value="Genomic_DNA"/>
</dbReference>
<dbReference type="RefSeq" id="WP_009873873.1">
    <property type="nucleotide sequence ID" value="NC_010287.1"/>
</dbReference>
<dbReference type="RefSeq" id="YP_001654855.1">
    <property type="nucleotide sequence ID" value="NC_010287.1"/>
</dbReference>
<dbReference type="SMR" id="B0B896"/>
<dbReference type="KEGG" id="ctb:CTL0784"/>
<dbReference type="PATRIC" id="fig|471472.4.peg.840"/>
<dbReference type="HOGENOM" id="CLU_058591_0_2_0"/>
<dbReference type="Proteomes" id="UP001154402">
    <property type="component" value="Chromosome"/>
</dbReference>
<dbReference type="GO" id="GO:0022627">
    <property type="term" value="C:cytosolic small ribosomal subunit"/>
    <property type="evidence" value="ECO:0007669"/>
    <property type="project" value="TreeGrafter"/>
</dbReference>
<dbReference type="GO" id="GO:0003729">
    <property type="term" value="F:mRNA binding"/>
    <property type="evidence" value="ECO:0007669"/>
    <property type="project" value="UniProtKB-UniRule"/>
</dbReference>
<dbReference type="GO" id="GO:0019843">
    <property type="term" value="F:rRNA binding"/>
    <property type="evidence" value="ECO:0007669"/>
    <property type="project" value="UniProtKB-UniRule"/>
</dbReference>
<dbReference type="GO" id="GO:0003735">
    <property type="term" value="F:structural constituent of ribosome"/>
    <property type="evidence" value="ECO:0007669"/>
    <property type="project" value="InterPro"/>
</dbReference>
<dbReference type="GO" id="GO:0006412">
    <property type="term" value="P:translation"/>
    <property type="evidence" value="ECO:0007669"/>
    <property type="project" value="UniProtKB-UniRule"/>
</dbReference>
<dbReference type="CDD" id="cd02412">
    <property type="entry name" value="KH-II_30S_S3"/>
    <property type="match status" value="1"/>
</dbReference>
<dbReference type="FunFam" id="3.30.300.20:FF:000001">
    <property type="entry name" value="30S ribosomal protein S3"/>
    <property type="match status" value="1"/>
</dbReference>
<dbReference type="Gene3D" id="3.30.300.20">
    <property type="match status" value="1"/>
</dbReference>
<dbReference type="Gene3D" id="3.30.1140.32">
    <property type="entry name" value="Ribosomal protein S3, C-terminal domain"/>
    <property type="match status" value="1"/>
</dbReference>
<dbReference type="HAMAP" id="MF_01309_B">
    <property type="entry name" value="Ribosomal_uS3_B"/>
    <property type="match status" value="1"/>
</dbReference>
<dbReference type="InterPro" id="IPR004087">
    <property type="entry name" value="KH_dom"/>
</dbReference>
<dbReference type="InterPro" id="IPR015946">
    <property type="entry name" value="KH_dom-like_a/b"/>
</dbReference>
<dbReference type="InterPro" id="IPR004044">
    <property type="entry name" value="KH_dom_type_2"/>
</dbReference>
<dbReference type="InterPro" id="IPR009019">
    <property type="entry name" value="KH_sf_prok-type"/>
</dbReference>
<dbReference type="InterPro" id="IPR036419">
    <property type="entry name" value="Ribosomal_S3_C_sf"/>
</dbReference>
<dbReference type="InterPro" id="IPR005704">
    <property type="entry name" value="Ribosomal_uS3_bac-typ"/>
</dbReference>
<dbReference type="InterPro" id="IPR001351">
    <property type="entry name" value="Ribosomal_uS3_C"/>
</dbReference>
<dbReference type="InterPro" id="IPR018280">
    <property type="entry name" value="Ribosomal_uS3_CS"/>
</dbReference>
<dbReference type="NCBIfam" id="TIGR01009">
    <property type="entry name" value="rpsC_bact"/>
    <property type="match status" value="1"/>
</dbReference>
<dbReference type="PANTHER" id="PTHR11760">
    <property type="entry name" value="30S/40S RIBOSOMAL PROTEIN S3"/>
    <property type="match status" value="1"/>
</dbReference>
<dbReference type="PANTHER" id="PTHR11760:SF19">
    <property type="entry name" value="SMALL RIBOSOMAL SUBUNIT PROTEIN US3C"/>
    <property type="match status" value="1"/>
</dbReference>
<dbReference type="Pfam" id="PF07650">
    <property type="entry name" value="KH_2"/>
    <property type="match status" value="1"/>
</dbReference>
<dbReference type="Pfam" id="PF00189">
    <property type="entry name" value="Ribosomal_S3_C"/>
    <property type="match status" value="1"/>
</dbReference>
<dbReference type="SMART" id="SM00322">
    <property type="entry name" value="KH"/>
    <property type="match status" value="1"/>
</dbReference>
<dbReference type="SUPFAM" id="SSF54814">
    <property type="entry name" value="Prokaryotic type KH domain (KH-domain type II)"/>
    <property type="match status" value="1"/>
</dbReference>
<dbReference type="SUPFAM" id="SSF54821">
    <property type="entry name" value="Ribosomal protein S3 C-terminal domain"/>
    <property type="match status" value="1"/>
</dbReference>
<dbReference type="PROSITE" id="PS50823">
    <property type="entry name" value="KH_TYPE_2"/>
    <property type="match status" value="1"/>
</dbReference>
<dbReference type="PROSITE" id="PS00548">
    <property type="entry name" value="RIBOSOMAL_S3"/>
    <property type="match status" value="1"/>
</dbReference>
<accession>B0B896</accession>
<name>RS3_CHLT2</name>
<comment type="function">
    <text evidence="1">Binds the lower part of the 30S subunit head. Binds mRNA in the 70S ribosome, positioning it for translation.</text>
</comment>
<comment type="subunit">
    <text evidence="1">Part of the 30S ribosomal subunit. Forms a tight complex with proteins S10 and S14.</text>
</comment>
<comment type="similarity">
    <text evidence="1">Belongs to the universal ribosomal protein uS3 family.</text>
</comment>
<reference key="1">
    <citation type="journal article" date="2008" name="Genome Res.">
        <title>Chlamydia trachomatis: genome sequence analysis of lymphogranuloma venereum isolates.</title>
        <authorList>
            <person name="Thomson N.R."/>
            <person name="Holden M.T.G."/>
            <person name="Carder C."/>
            <person name="Lennard N."/>
            <person name="Lockey S.J."/>
            <person name="Marsh P."/>
            <person name="Skipp P."/>
            <person name="O'Connor C.D."/>
            <person name="Goodhead I."/>
            <person name="Norbertzcak H."/>
            <person name="Harris B."/>
            <person name="Ormond D."/>
            <person name="Rance R."/>
            <person name="Quail M.A."/>
            <person name="Parkhill J."/>
            <person name="Stephens R.S."/>
            <person name="Clarke I.N."/>
        </authorList>
    </citation>
    <scope>NUCLEOTIDE SEQUENCE [LARGE SCALE GENOMIC DNA]</scope>
    <source>
        <strain>ATCC VR-902B / DSM 19102 / 434/Bu</strain>
    </source>
</reference>
<feature type="chain" id="PRO_1000140939" description="Small ribosomal subunit protein uS3">
    <location>
        <begin position="1"/>
        <end position="224"/>
    </location>
</feature>
<feature type="domain" description="KH type-2" evidence="1">
    <location>
        <begin position="39"/>
        <end position="107"/>
    </location>
</feature>
<gene>
    <name evidence="1" type="primary">rpsC</name>
    <name type="ordered locus">CTL0784</name>
</gene>
<evidence type="ECO:0000255" key="1">
    <source>
        <dbReference type="HAMAP-Rule" id="MF_01309"/>
    </source>
</evidence>
<evidence type="ECO:0000305" key="2"/>
<keyword id="KW-0687">Ribonucleoprotein</keyword>
<keyword id="KW-0689">Ribosomal protein</keyword>
<keyword id="KW-0694">RNA-binding</keyword>
<keyword id="KW-0699">rRNA-binding</keyword>
<sequence>MGQKGCPVGFRTAVTKKWRSLWYGNNQEFGKFLIEDVKIREFLKKKPSCQGAAGFVVKRMSGKIEVTIHTARPGLVIGKKGAEVESLKAELKKLTGKDVWVEIAEVKRPELNAQLVADGIAKQIERRVSFRRAMKKALQSVMDAGALGVKVQVSGRLAGAEIARSEWYKNGRVPLHTLRADIDYATASAETTYGIIGIKVWINLGEKKAVPAANHAGAASTAAA</sequence>
<organism>
    <name type="scientific">Chlamydia trachomatis serovar L2 (strain ATCC VR-902B / DSM 19102 / 434/Bu)</name>
    <dbReference type="NCBI Taxonomy" id="471472"/>
    <lineage>
        <taxon>Bacteria</taxon>
        <taxon>Pseudomonadati</taxon>
        <taxon>Chlamydiota</taxon>
        <taxon>Chlamydiia</taxon>
        <taxon>Chlamydiales</taxon>
        <taxon>Chlamydiaceae</taxon>
        <taxon>Chlamydia/Chlamydophila group</taxon>
        <taxon>Chlamydia</taxon>
    </lineage>
</organism>
<protein>
    <recommendedName>
        <fullName evidence="1">Small ribosomal subunit protein uS3</fullName>
    </recommendedName>
    <alternativeName>
        <fullName evidence="2">30S ribosomal protein S3</fullName>
    </alternativeName>
</protein>
<proteinExistence type="inferred from homology"/>